<accession>B9DNK5</accession>
<comment type="function">
    <text evidence="1">Binds directly to 16S ribosomal RNA.</text>
</comment>
<comment type="similarity">
    <text evidence="1">Belongs to the bacterial ribosomal protein bS20 family.</text>
</comment>
<reference key="1">
    <citation type="journal article" date="2009" name="Appl. Environ. Microbiol.">
        <title>Genome analysis of the meat starter culture bacterium Staphylococcus carnosus TM300.</title>
        <authorList>
            <person name="Rosenstein R."/>
            <person name="Nerz C."/>
            <person name="Biswas L."/>
            <person name="Resch A."/>
            <person name="Raddatz G."/>
            <person name="Schuster S.C."/>
            <person name="Goetz F."/>
        </authorList>
    </citation>
    <scope>NUCLEOTIDE SEQUENCE [LARGE SCALE GENOMIC DNA]</scope>
    <source>
        <strain>TM300</strain>
    </source>
</reference>
<keyword id="KW-1185">Reference proteome</keyword>
<keyword id="KW-0687">Ribonucleoprotein</keyword>
<keyword id="KW-0689">Ribosomal protein</keyword>
<keyword id="KW-0694">RNA-binding</keyword>
<keyword id="KW-0699">rRNA-binding</keyword>
<feature type="chain" id="PRO_1000194264" description="Small ribosomal subunit protein bS20">
    <location>
        <begin position="1"/>
        <end position="83"/>
    </location>
</feature>
<organism>
    <name type="scientific">Staphylococcus carnosus (strain TM300)</name>
    <dbReference type="NCBI Taxonomy" id="396513"/>
    <lineage>
        <taxon>Bacteria</taxon>
        <taxon>Bacillati</taxon>
        <taxon>Bacillota</taxon>
        <taxon>Bacilli</taxon>
        <taxon>Bacillales</taxon>
        <taxon>Staphylococcaceae</taxon>
        <taxon>Staphylococcus</taxon>
    </lineage>
</organism>
<name>RS20_STACT</name>
<gene>
    <name evidence="1" type="primary">rpsT</name>
    <name type="ordered locus">Sca_1207</name>
</gene>
<sequence length="83" mass="9237">MPNIKSAIKRVRTNETAEARNISQKNDMRSAVKHAKAAIAENADNKQELVRVAVKKVDKTAQANLIHNNKADRIKSQLMSADK</sequence>
<proteinExistence type="inferred from homology"/>
<protein>
    <recommendedName>
        <fullName evidence="1">Small ribosomal subunit protein bS20</fullName>
    </recommendedName>
    <alternativeName>
        <fullName evidence="2">30S ribosomal protein S20</fullName>
    </alternativeName>
</protein>
<dbReference type="EMBL" id="AM295250">
    <property type="protein sequence ID" value="CAL28114.1"/>
    <property type="molecule type" value="Genomic_DNA"/>
</dbReference>
<dbReference type="RefSeq" id="WP_015900454.1">
    <property type="nucleotide sequence ID" value="NC_012121.1"/>
</dbReference>
<dbReference type="SMR" id="B9DNK5"/>
<dbReference type="GeneID" id="93793632"/>
<dbReference type="KEGG" id="sca:SCA_1207"/>
<dbReference type="eggNOG" id="COG0268">
    <property type="taxonomic scope" value="Bacteria"/>
</dbReference>
<dbReference type="HOGENOM" id="CLU_160655_1_1_9"/>
<dbReference type="OrthoDB" id="9808392at2"/>
<dbReference type="BioCyc" id="SCAR396513:SCA_RS06045-MONOMER"/>
<dbReference type="Proteomes" id="UP000000444">
    <property type="component" value="Chromosome"/>
</dbReference>
<dbReference type="GO" id="GO:0005829">
    <property type="term" value="C:cytosol"/>
    <property type="evidence" value="ECO:0007669"/>
    <property type="project" value="TreeGrafter"/>
</dbReference>
<dbReference type="GO" id="GO:0015935">
    <property type="term" value="C:small ribosomal subunit"/>
    <property type="evidence" value="ECO:0007669"/>
    <property type="project" value="TreeGrafter"/>
</dbReference>
<dbReference type="GO" id="GO:0070181">
    <property type="term" value="F:small ribosomal subunit rRNA binding"/>
    <property type="evidence" value="ECO:0007669"/>
    <property type="project" value="TreeGrafter"/>
</dbReference>
<dbReference type="GO" id="GO:0003735">
    <property type="term" value="F:structural constituent of ribosome"/>
    <property type="evidence" value="ECO:0007669"/>
    <property type="project" value="InterPro"/>
</dbReference>
<dbReference type="GO" id="GO:0006412">
    <property type="term" value="P:translation"/>
    <property type="evidence" value="ECO:0007669"/>
    <property type="project" value="UniProtKB-UniRule"/>
</dbReference>
<dbReference type="Gene3D" id="1.20.58.110">
    <property type="entry name" value="Ribosomal protein S20"/>
    <property type="match status" value="1"/>
</dbReference>
<dbReference type="HAMAP" id="MF_00500">
    <property type="entry name" value="Ribosomal_bS20"/>
    <property type="match status" value="1"/>
</dbReference>
<dbReference type="InterPro" id="IPR002583">
    <property type="entry name" value="Ribosomal_bS20"/>
</dbReference>
<dbReference type="InterPro" id="IPR036510">
    <property type="entry name" value="Ribosomal_bS20_sf"/>
</dbReference>
<dbReference type="NCBIfam" id="TIGR00029">
    <property type="entry name" value="S20"/>
    <property type="match status" value="1"/>
</dbReference>
<dbReference type="PANTHER" id="PTHR33398">
    <property type="entry name" value="30S RIBOSOMAL PROTEIN S20"/>
    <property type="match status" value="1"/>
</dbReference>
<dbReference type="PANTHER" id="PTHR33398:SF1">
    <property type="entry name" value="SMALL RIBOSOMAL SUBUNIT PROTEIN BS20C"/>
    <property type="match status" value="1"/>
</dbReference>
<dbReference type="Pfam" id="PF01649">
    <property type="entry name" value="Ribosomal_S20p"/>
    <property type="match status" value="1"/>
</dbReference>
<dbReference type="SUPFAM" id="SSF46992">
    <property type="entry name" value="Ribosomal protein S20"/>
    <property type="match status" value="1"/>
</dbReference>
<evidence type="ECO:0000255" key="1">
    <source>
        <dbReference type="HAMAP-Rule" id="MF_00500"/>
    </source>
</evidence>
<evidence type="ECO:0000305" key="2"/>